<sequence>MAGDFIRVHCDDCENEQVLFGKAANTVNCAVCGSTLATPTGGEADLHGDVVDVVESR</sequence>
<name>RS27_NATPD</name>
<reference key="1">
    <citation type="journal article" date="2005" name="Genome Res.">
        <title>Living with two extremes: conclusions from the genome sequence of Natronomonas pharaonis.</title>
        <authorList>
            <person name="Falb M."/>
            <person name="Pfeiffer F."/>
            <person name="Palm P."/>
            <person name="Rodewald K."/>
            <person name="Hickmann V."/>
            <person name="Tittor J."/>
            <person name="Oesterhelt D."/>
        </authorList>
    </citation>
    <scope>NUCLEOTIDE SEQUENCE [LARGE SCALE GENOMIC DNA]</scope>
    <source>
        <strain>ATCC 35678 / DSM 2160 / CIP 103997 / JCM 8858 / NBRC 14720 / NCIMB 2260 / Gabara</strain>
    </source>
</reference>
<organism>
    <name type="scientific">Natronomonas pharaonis (strain ATCC 35678 / DSM 2160 / CIP 103997 / JCM 8858 / NBRC 14720 / NCIMB 2260 / Gabara)</name>
    <name type="common">Halobacterium pharaonis</name>
    <dbReference type="NCBI Taxonomy" id="348780"/>
    <lineage>
        <taxon>Archaea</taxon>
        <taxon>Methanobacteriati</taxon>
        <taxon>Methanobacteriota</taxon>
        <taxon>Stenosarchaea group</taxon>
        <taxon>Halobacteria</taxon>
        <taxon>Halobacteriales</taxon>
        <taxon>Haloarculaceae</taxon>
        <taxon>Natronomonas</taxon>
    </lineage>
</organism>
<feature type="chain" id="PRO_1000007135" description="Small ribosomal subunit protein eS27">
    <location>
        <begin position="1"/>
        <end position="57"/>
    </location>
</feature>
<feature type="zinc finger region" description="C4-type" evidence="1">
    <location>
        <begin position="10"/>
        <end position="32"/>
    </location>
</feature>
<feature type="binding site" evidence="1">
    <location>
        <position position="10"/>
    </location>
    <ligand>
        <name>Zn(2+)</name>
        <dbReference type="ChEBI" id="CHEBI:29105"/>
    </ligand>
</feature>
<feature type="binding site" evidence="1">
    <location>
        <position position="13"/>
    </location>
    <ligand>
        <name>Zn(2+)</name>
        <dbReference type="ChEBI" id="CHEBI:29105"/>
    </ligand>
</feature>
<feature type="binding site" evidence="1">
    <location>
        <position position="29"/>
    </location>
    <ligand>
        <name>Zn(2+)</name>
        <dbReference type="ChEBI" id="CHEBI:29105"/>
    </ligand>
</feature>
<feature type="binding site" evidence="1">
    <location>
        <position position="32"/>
    </location>
    <ligand>
        <name>Zn(2+)</name>
        <dbReference type="ChEBI" id="CHEBI:29105"/>
    </ligand>
</feature>
<keyword id="KW-0479">Metal-binding</keyword>
<keyword id="KW-1185">Reference proteome</keyword>
<keyword id="KW-0687">Ribonucleoprotein</keyword>
<keyword id="KW-0689">Ribosomal protein</keyword>
<keyword id="KW-0862">Zinc</keyword>
<keyword id="KW-0863">Zinc-finger</keyword>
<evidence type="ECO:0000255" key="1">
    <source>
        <dbReference type="HAMAP-Rule" id="MF_00371"/>
    </source>
</evidence>
<evidence type="ECO:0000305" key="2"/>
<accession>Q3ISI7</accession>
<comment type="cofactor">
    <cofactor evidence="1">
        <name>Zn(2+)</name>
        <dbReference type="ChEBI" id="CHEBI:29105"/>
    </cofactor>
    <text evidence="1">Binds 1 zinc ion per subunit.</text>
</comment>
<comment type="subunit">
    <text evidence="1">Part of the 30S ribosomal subunit.</text>
</comment>
<comment type="similarity">
    <text evidence="1">Belongs to the eukaryotic ribosomal protein eS27 family.</text>
</comment>
<proteinExistence type="inferred from homology"/>
<gene>
    <name evidence="1" type="primary">rps27e</name>
    <name type="ordered locus">NP_1616A</name>
</gene>
<protein>
    <recommendedName>
        <fullName evidence="1">Small ribosomal subunit protein eS27</fullName>
    </recommendedName>
    <alternativeName>
        <fullName evidence="2">30S ribosomal protein S27e</fullName>
    </alternativeName>
</protein>
<dbReference type="EMBL" id="CR936257">
    <property type="protein sequence ID" value="CAI48899.1"/>
    <property type="molecule type" value="Genomic_DNA"/>
</dbReference>
<dbReference type="RefSeq" id="WP_011322533.1">
    <property type="nucleotide sequence ID" value="NC_007426.1"/>
</dbReference>
<dbReference type="SMR" id="Q3ISI7"/>
<dbReference type="STRING" id="348780.NP_1616A"/>
<dbReference type="EnsemblBacteria" id="CAI48899">
    <property type="protein sequence ID" value="CAI48899"/>
    <property type="gene ID" value="NP_1616A"/>
</dbReference>
<dbReference type="GeneID" id="3703178"/>
<dbReference type="KEGG" id="nph:NP_1616A"/>
<dbReference type="eggNOG" id="arCOG04108">
    <property type="taxonomic scope" value="Archaea"/>
</dbReference>
<dbReference type="HOGENOM" id="CLU_199465_0_0_2"/>
<dbReference type="OrthoDB" id="5718at2157"/>
<dbReference type="Proteomes" id="UP000002698">
    <property type="component" value="Chromosome"/>
</dbReference>
<dbReference type="GO" id="GO:1990904">
    <property type="term" value="C:ribonucleoprotein complex"/>
    <property type="evidence" value="ECO:0007669"/>
    <property type="project" value="UniProtKB-KW"/>
</dbReference>
<dbReference type="GO" id="GO:0005840">
    <property type="term" value="C:ribosome"/>
    <property type="evidence" value="ECO:0007669"/>
    <property type="project" value="UniProtKB-KW"/>
</dbReference>
<dbReference type="GO" id="GO:0003735">
    <property type="term" value="F:structural constituent of ribosome"/>
    <property type="evidence" value="ECO:0007669"/>
    <property type="project" value="InterPro"/>
</dbReference>
<dbReference type="GO" id="GO:0008270">
    <property type="term" value="F:zinc ion binding"/>
    <property type="evidence" value="ECO:0007669"/>
    <property type="project" value="UniProtKB-UniRule"/>
</dbReference>
<dbReference type="GO" id="GO:0006412">
    <property type="term" value="P:translation"/>
    <property type="evidence" value="ECO:0007669"/>
    <property type="project" value="UniProtKB-UniRule"/>
</dbReference>
<dbReference type="Gene3D" id="2.20.25.100">
    <property type="entry name" value="Zn-binding ribosomal proteins"/>
    <property type="match status" value="1"/>
</dbReference>
<dbReference type="HAMAP" id="MF_00371">
    <property type="entry name" value="Ribosomal_eS27"/>
    <property type="match status" value="1"/>
</dbReference>
<dbReference type="InterPro" id="IPR000592">
    <property type="entry name" value="Ribosomal_eS27"/>
</dbReference>
<dbReference type="InterPro" id="IPR023407">
    <property type="entry name" value="Ribosomal_eS27_Zn-bd_dom_sf"/>
</dbReference>
<dbReference type="InterPro" id="IPR011332">
    <property type="entry name" value="Ribosomal_zn-bd"/>
</dbReference>
<dbReference type="NCBIfam" id="NF001629">
    <property type="entry name" value="PRK00415.1"/>
    <property type="match status" value="1"/>
</dbReference>
<dbReference type="Pfam" id="PF01667">
    <property type="entry name" value="Ribosomal_S27e"/>
    <property type="match status" value="1"/>
</dbReference>
<dbReference type="SUPFAM" id="SSF57829">
    <property type="entry name" value="Zn-binding ribosomal proteins"/>
    <property type="match status" value="1"/>
</dbReference>